<feature type="chain" id="PRO_1000074372" description="SsrA-binding protein">
    <location>
        <begin position="1"/>
        <end position="164"/>
    </location>
</feature>
<organism>
    <name type="scientific">Shewanella sediminis (strain HAW-EB3)</name>
    <dbReference type="NCBI Taxonomy" id="425104"/>
    <lineage>
        <taxon>Bacteria</taxon>
        <taxon>Pseudomonadati</taxon>
        <taxon>Pseudomonadota</taxon>
        <taxon>Gammaproteobacteria</taxon>
        <taxon>Alteromonadales</taxon>
        <taxon>Shewanellaceae</taxon>
        <taxon>Shewanella</taxon>
    </lineage>
</organism>
<reference key="1">
    <citation type="submission" date="2007-08" db="EMBL/GenBank/DDBJ databases">
        <title>Complete sequence of Shewanella sediminis HAW-EB3.</title>
        <authorList>
            <consortium name="US DOE Joint Genome Institute"/>
            <person name="Copeland A."/>
            <person name="Lucas S."/>
            <person name="Lapidus A."/>
            <person name="Barry K."/>
            <person name="Glavina del Rio T."/>
            <person name="Dalin E."/>
            <person name="Tice H."/>
            <person name="Pitluck S."/>
            <person name="Chertkov O."/>
            <person name="Brettin T."/>
            <person name="Bruce D."/>
            <person name="Detter J.C."/>
            <person name="Han C."/>
            <person name="Schmutz J."/>
            <person name="Larimer F."/>
            <person name="Land M."/>
            <person name="Hauser L."/>
            <person name="Kyrpides N."/>
            <person name="Kim E."/>
            <person name="Zhao J.-S."/>
            <person name="Richardson P."/>
        </authorList>
    </citation>
    <scope>NUCLEOTIDE SEQUENCE [LARGE SCALE GENOMIC DNA]</scope>
    <source>
        <strain>HAW-EB3</strain>
    </source>
</reference>
<gene>
    <name evidence="1" type="primary">smpB</name>
    <name type="ordered locus">Ssed_1407</name>
</gene>
<proteinExistence type="inferred from homology"/>
<name>SSRP_SHESH</name>
<keyword id="KW-0963">Cytoplasm</keyword>
<keyword id="KW-1185">Reference proteome</keyword>
<keyword id="KW-0694">RNA-binding</keyword>
<comment type="function">
    <text evidence="1">Required for rescue of stalled ribosomes mediated by trans-translation. Binds to transfer-messenger RNA (tmRNA), required for stable association of tmRNA with ribosomes. tmRNA and SmpB together mimic tRNA shape, replacing the anticodon stem-loop with SmpB. tmRNA is encoded by the ssrA gene; the 2 termini fold to resemble tRNA(Ala) and it encodes a 'tag peptide', a short internal open reading frame. During trans-translation Ala-aminoacylated tmRNA acts like a tRNA, entering the A-site of stalled ribosomes, displacing the stalled mRNA. The ribosome then switches to translate the ORF on the tmRNA; the nascent peptide is terminated with the 'tag peptide' encoded by the tmRNA and targeted for degradation. The ribosome is freed to recommence translation, which seems to be the essential function of trans-translation.</text>
</comment>
<comment type="subcellular location">
    <subcellularLocation>
        <location evidence="1">Cytoplasm</location>
    </subcellularLocation>
    <text evidence="1">The tmRNA-SmpB complex associates with stalled 70S ribosomes.</text>
</comment>
<comment type="similarity">
    <text evidence="1">Belongs to the SmpB family.</text>
</comment>
<sequence length="164" mass="18850">MAKKNAKKSKNSSASIARNKRATFDYKFEEKMEAGLSLMGWEVKSIRMGKVNLSESYVFMRDGEAFLFGCTIAPLNTASTHVVCDPMRSRKLLLKRKELDKLQGLVDRKGYSIVPISMYWQKGAWVKIEIGLGKGKKEHDKRDDTKDREWQIEKARTMKKAVQQ</sequence>
<accession>A8FT45</accession>
<dbReference type="EMBL" id="CP000821">
    <property type="protein sequence ID" value="ABV36018.1"/>
    <property type="molecule type" value="Genomic_DNA"/>
</dbReference>
<dbReference type="RefSeq" id="WP_012141754.1">
    <property type="nucleotide sequence ID" value="NC_009831.1"/>
</dbReference>
<dbReference type="SMR" id="A8FT45"/>
<dbReference type="STRING" id="425104.Ssed_1407"/>
<dbReference type="KEGG" id="sse:Ssed_1407"/>
<dbReference type="eggNOG" id="COG0691">
    <property type="taxonomic scope" value="Bacteria"/>
</dbReference>
<dbReference type="HOGENOM" id="CLU_108953_3_0_6"/>
<dbReference type="OrthoDB" id="9805462at2"/>
<dbReference type="Proteomes" id="UP000002015">
    <property type="component" value="Chromosome"/>
</dbReference>
<dbReference type="GO" id="GO:0005829">
    <property type="term" value="C:cytosol"/>
    <property type="evidence" value="ECO:0007669"/>
    <property type="project" value="TreeGrafter"/>
</dbReference>
<dbReference type="GO" id="GO:0003723">
    <property type="term" value="F:RNA binding"/>
    <property type="evidence" value="ECO:0007669"/>
    <property type="project" value="UniProtKB-UniRule"/>
</dbReference>
<dbReference type="GO" id="GO:0070929">
    <property type="term" value="P:trans-translation"/>
    <property type="evidence" value="ECO:0007669"/>
    <property type="project" value="UniProtKB-UniRule"/>
</dbReference>
<dbReference type="CDD" id="cd09294">
    <property type="entry name" value="SmpB"/>
    <property type="match status" value="1"/>
</dbReference>
<dbReference type="Gene3D" id="2.40.280.10">
    <property type="match status" value="1"/>
</dbReference>
<dbReference type="HAMAP" id="MF_00023">
    <property type="entry name" value="SmpB"/>
    <property type="match status" value="1"/>
</dbReference>
<dbReference type="InterPro" id="IPR023620">
    <property type="entry name" value="SmpB"/>
</dbReference>
<dbReference type="InterPro" id="IPR000037">
    <property type="entry name" value="SsrA-bd_prot"/>
</dbReference>
<dbReference type="InterPro" id="IPR020081">
    <property type="entry name" value="SsrA-bd_prot_CS"/>
</dbReference>
<dbReference type="NCBIfam" id="NF003843">
    <property type="entry name" value="PRK05422.1"/>
    <property type="match status" value="1"/>
</dbReference>
<dbReference type="NCBIfam" id="TIGR00086">
    <property type="entry name" value="smpB"/>
    <property type="match status" value="1"/>
</dbReference>
<dbReference type="PANTHER" id="PTHR30308:SF2">
    <property type="entry name" value="SSRA-BINDING PROTEIN"/>
    <property type="match status" value="1"/>
</dbReference>
<dbReference type="PANTHER" id="PTHR30308">
    <property type="entry name" value="TMRNA-BINDING COMPONENT OF TRANS-TRANSLATION TAGGING COMPLEX"/>
    <property type="match status" value="1"/>
</dbReference>
<dbReference type="Pfam" id="PF01668">
    <property type="entry name" value="SmpB"/>
    <property type="match status" value="1"/>
</dbReference>
<dbReference type="SUPFAM" id="SSF74982">
    <property type="entry name" value="Small protein B (SmpB)"/>
    <property type="match status" value="1"/>
</dbReference>
<dbReference type="PROSITE" id="PS01317">
    <property type="entry name" value="SSRP"/>
    <property type="match status" value="1"/>
</dbReference>
<protein>
    <recommendedName>
        <fullName evidence="1">SsrA-binding protein</fullName>
    </recommendedName>
    <alternativeName>
        <fullName evidence="1">Small protein B</fullName>
    </alternativeName>
</protein>
<evidence type="ECO:0000255" key="1">
    <source>
        <dbReference type="HAMAP-Rule" id="MF_00023"/>
    </source>
</evidence>